<name>RL34_METPP</name>
<organism>
    <name type="scientific">Methylibium petroleiphilum (strain ATCC BAA-1232 / LMG 22953 / PM1)</name>
    <dbReference type="NCBI Taxonomy" id="420662"/>
    <lineage>
        <taxon>Bacteria</taxon>
        <taxon>Pseudomonadati</taxon>
        <taxon>Pseudomonadota</taxon>
        <taxon>Betaproteobacteria</taxon>
        <taxon>Burkholderiales</taxon>
        <taxon>Sphaerotilaceae</taxon>
        <taxon>Methylibium</taxon>
    </lineage>
</organism>
<keyword id="KW-1185">Reference proteome</keyword>
<keyword id="KW-0687">Ribonucleoprotein</keyword>
<keyword id="KW-0689">Ribosomal protein</keyword>
<dbReference type="EMBL" id="CP000555">
    <property type="protein sequence ID" value="ABM96781.1"/>
    <property type="molecule type" value="Genomic_DNA"/>
</dbReference>
<dbReference type="RefSeq" id="WP_011831400.1">
    <property type="nucleotide sequence ID" value="NC_008825.1"/>
</dbReference>
<dbReference type="SMR" id="A2SMJ2"/>
<dbReference type="STRING" id="420662.Mpe_A3828"/>
<dbReference type="KEGG" id="mpt:Mpe_A3828"/>
<dbReference type="eggNOG" id="COG0230">
    <property type="taxonomic scope" value="Bacteria"/>
</dbReference>
<dbReference type="HOGENOM" id="CLU_129938_2_0_4"/>
<dbReference type="Proteomes" id="UP000000366">
    <property type="component" value="Chromosome"/>
</dbReference>
<dbReference type="GO" id="GO:1990904">
    <property type="term" value="C:ribonucleoprotein complex"/>
    <property type="evidence" value="ECO:0007669"/>
    <property type="project" value="UniProtKB-KW"/>
</dbReference>
<dbReference type="GO" id="GO:0005840">
    <property type="term" value="C:ribosome"/>
    <property type="evidence" value="ECO:0007669"/>
    <property type="project" value="UniProtKB-KW"/>
</dbReference>
<dbReference type="GO" id="GO:0003735">
    <property type="term" value="F:structural constituent of ribosome"/>
    <property type="evidence" value="ECO:0007669"/>
    <property type="project" value="InterPro"/>
</dbReference>
<dbReference type="GO" id="GO:0006412">
    <property type="term" value="P:translation"/>
    <property type="evidence" value="ECO:0007669"/>
    <property type="project" value="UniProtKB-UniRule"/>
</dbReference>
<dbReference type="FunFam" id="1.10.287.3980:FF:000001">
    <property type="entry name" value="Mitochondrial ribosomal protein L34"/>
    <property type="match status" value="1"/>
</dbReference>
<dbReference type="Gene3D" id="1.10.287.3980">
    <property type="match status" value="1"/>
</dbReference>
<dbReference type="HAMAP" id="MF_00391">
    <property type="entry name" value="Ribosomal_bL34"/>
    <property type="match status" value="1"/>
</dbReference>
<dbReference type="InterPro" id="IPR000271">
    <property type="entry name" value="Ribosomal_bL34"/>
</dbReference>
<dbReference type="InterPro" id="IPR020939">
    <property type="entry name" value="Ribosomal_bL34_CS"/>
</dbReference>
<dbReference type="NCBIfam" id="TIGR01030">
    <property type="entry name" value="rpmH_bact"/>
    <property type="match status" value="1"/>
</dbReference>
<dbReference type="PANTHER" id="PTHR14503:SF4">
    <property type="entry name" value="LARGE RIBOSOMAL SUBUNIT PROTEIN BL34M"/>
    <property type="match status" value="1"/>
</dbReference>
<dbReference type="PANTHER" id="PTHR14503">
    <property type="entry name" value="MITOCHONDRIAL RIBOSOMAL PROTEIN 34 FAMILY MEMBER"/>
    <property type="match status" value="1"/>
</dbReference>
<dbReference type="Pfam" id="PF00468">
    <property type="entry name" value="Ribosomal_L34"/>
    <property type="match status" value="1"/>
</dbReference>
<dbReference type="PROSITE" id="PS00784">
    <property type="entry name" value="RIBOSOMAL_L34"/>
    <property type="match status" value="1"/>
</dbReference>
<gene>
    <name evidence="1" type="primary">rpmH</name>
    <name type="ordered locus">Mpe_A3828</name>
</gene>
<proteinExistence type="inferred from homology"/>
<feature type="chain" id="PRO_1000013373" description="Large ribosomal subunit protein bL34">
    <location>
        <begin position="1"/>
        <end position="44"/>
    </location>
</feature>
<sequence length="44" mass="5223">MKRTYQPSKTRRARTHGFLVRMKTRGGRRVLNARRAKGRKRLGL</sequence>
<protein>
    <recommendedName>
        <fullName evidence="1">Large ribosomal subunit protein bL34</fullName>
    </recommendedName>
    <alternativeName>
        <fullName evidence="2">50S ribosomal protein L34</fullName>
    </alternativeName>
</protein>
<evidence type="ECO:0000255" key="1">
    <source>
        <dbReference type="HAMAP-Rule" id="MF_00391"/>
    </source>
</evidence>
<evidence type="ECO:0000305" key="2"/>
<accession>A2SMJ2</accession>
<reference key="1">
    <citation type="journal article" date="2007" name="J. Bacteriol.">
        <title>Whole-genome analysis of the methyl tert-butyl ether-degrading beta-proteobacterium Methylibium petroleiphilum PM1.</title>
        <authorList>
            <person name="Kane S.R."/>
            <person name="Chakicherla A.Y."/>
            <person name="Chain P.S.G."/>
            <person name="Schmidt R."/>
            <person name="Shin M.W."/>
            <person name="Legler T.C."/>
            <person name="Scow K.M."/>
            <person name="Larimer F.W."/>
            <person name="Lucas S.M."/>
            <person name="Richardson P.M."/>
            <person name="Hristova K.R."/>
        </authorList>
    </citation>
    <scope>NUCLEOTIDE SEQUENCE [LARGE SCALE GENOMIC DNA]</scope>
    <source>
        <strain>ATCC BAA-1232 / LMG 22953 / PM1</strain>
    </source>
</reference>
<comment type="similarity">
    <text evidence="1">Belongs to the bacterial ribosomal protein bL34 family.</text>
</comment>